<comment type="similarity">
    <text evidence="1">Belongs to the UPF0178 family.</text>
</comment>
<evidence type="ECO:0000255" key="1">
    <source>
        <dbReference type="HAMAP-Rule" id="MF_00489"/>
    </source>
</evidence>
<dbReference type="EMBL" id="AP008934">
    <property type="protein sequence ID" value="BAE19183.1"/>
    <property type="molecule type" value="Genomic_DNA"/>
</dbReference>
<dbReference type="RefSeq" id="WP_002483977.1">
    <property type="nucleotide sequence ID" value="NZ_MTGA01000039.1"/>
</dbReference>
<dbReference type="KEGG" id="ssp:SSP2038"/>
<dbReference type="eggNOG" id="COG1671">
    <property type="taxonomic scope" value="Bacteria"/>
</dbReference>
<dbReference type="HOGENOM" id="CLU_106619_0_0_9"/>
<dbReference type="OrthoDB" id="9798918at2"/>
<dbReference type="Proteomes" id="UP000006371">
    <property type="component" value="Chromosome"/>
</dbReference>
<dbReference type="HAMAP" id="MF_00489">
    <property type="entry name" value="UPF0178"/>
    <property type="match status" value="1"/>
</dbReference>
<dbReference type="InterPro" id="IPR003791">
    <property type="entry name" value="UPF0178"/>
</dbReference>
<dbReference type="NCBIfam" id="NF001095">
    <property type="entry name" value="PRK00124.1"/>
    <property type="match status" value="1"/>
</dbReference>
<dbReference type="PANTHER" id="PTHR35146">
    <property type="entry name" value="UPF0178 PROTEIN YAII"/>
    <property type="match status" value="1"/>
</dbReference>
<dbReference type="PANTHER" id="PTHR35146:SF1">
    <property type="entry name" value="UPF0178 PROTEIN YAII"/>
    <property type="match status" value="1"/>
</dbReference>
<dbReference type="Pfam" id="PF02639">
    <property type="entry name" value="DUF188"/>
    <property type="match status" value="1"/>
</dbReference>
<feature type="chain" id="PRO_0000241836" description="UPF0178 protein SSP2038">
    <location>
        <begin position="1"/>
        <end position="154"/>
    </location>
</feature>
<sequence length="154" mass="17271">MTQVIIDGDACPVTNSIIELTKGTGIFVTVVRSFSHFSTVIQPEHVNIIYVDDGPDAVDYRIVKLVHSDDLVVTQDYGLASLLLNKAKIVMHHKGFIYNQENINTLLEQRHASAQFRKSGGRTKGPAAFTEEDVSKFESIFSNLIHKYFLETED</sequence>
<accession>Q49VM7</accession>
<organism>
    <name type="scientific">Staphylococcus saprophyticus subsp. saprophyticus (strain ATCC 15305 / DSM 20229 / NCIMB 8711 / NCTC 7292 / S-41)</name>
    <dbReference type="NCBI Taxonomy" id="342451"/>
    <lineage>
        <taxon>Bacteria</taxon>
        <taxon>Bacillati</taxon>
        <taxon>Bacillota</taxon>
        <taxon>Bacilli</taxon>
        <taxon>Bacillales</taxon>
        <taxon>Staphylococcaceae</taxon>
        <taxon>Staphylococcus</taxon>
    </lineage>
</organism>
<gene>
    <name type="ordered locus">SSP2038</name>
</gene>
<reference key="1">
    <citation type="journal article" date="2005" name="Proc. Natl. Acad. Sci. U.S.A.">
        <title>Whole genome sequence of Staphylococcus saprophyticus reveals the pathogenesis of uncomplicated urinary tract infection.</title>
        <authorList>
            <person name="Kuroda M."/>
            <person name="Yamashita A."/>
            <person name="Hirakawa H."/>
            <person name="Kumano M."/>
            <person name="Morikawa K."/>
            <person name="Higashide M."/>
            <person name="Maruyama A."/>
            <person name="Inose Y."/>
            <person name="Matoba K."/>
            <person name="Toh H."/>
            <person name="Kuhara S."/>
            <person name="Hattori M."/>
            <person name="Ohta T."/>
        </authorList>
    </citation>
    <scope>NUCLEOTIDE SEQUENCE [LARGE SCALE GENOMIC DNA]</scope>
    <source>
        <strain>ATCC 15305 / DSM 20229 / NCIMB 8711 / NCTC 7292 / S-41</strain>
    </source>
</reference>
<protein>
    <recommendedName>
        <fullName evidence="1">UPF0178 protein SSP2038</fullName>
    </recommendedName>
</protein>
<keyword id="KW-1185">Reference proteome</keyword>
<name>Y2038_STAS1</name>
<proteinExistence type="inferred from homology"/>